<keyword id="KW-0028">Amino-acid biosynthesis</keyword>
<keyword id="KW-0032">Aminotransferase</keyword>
<keyword id="KW-0055">Arginine biosynthesis</keyword>
<keyword id="KW-0963">Cytoplasm</keyword>
<keyword id="KW-0663">Pyridoxal phosphate</keyword>
<keyword id="KW-1185">Reference proteome</keyword>
<keyword id="KW-0808">Transferase</keyword>
<comment type="catalytic activity">
    <reaction evidence="1">
        <text>N(2)-acetyl-L-ornithine + 2-oxoglutarate = N-acetyl-L-glutamate 5-semialdehyde + L-glutamate</text>
        <dbReference type="Rhea" id="RHEA:18049"/>
        <dbReference type="ChEBI" id="CHEBI:16810"/>
        <dbReference type="ChEBI" id="CHEBI:29123"/>
        <dbReference type="ChEBI" id="CHEBI:29985"/>
        <dbReference type="ChEBI" id="CHEBI:57805"/>
        <dbReference type="EC" id="2.6.1.11"/>
    </reaction>
</comment>
<comment type="cofactor">
    <cofactor evidence="1">
        <name>pyridoxal 5'-phosphate</name>
        <dbReference type="ChEBI" id="CHEBI:597326"/>
    </cofactor>
    <text evidence="1">Binds 1 pyridoxal phosphate per subunit.</text>
</comment>
<comment type="pathway">
    <text evidence="1">Amino-acid biosynthesis; L-arginine biosynthesis; N(2)-acetyl-L-ornithine from L-glutamate: step 4/4.</text>
</comment>
<comment type="subunit">
    <text evidence="1">Homodimer.</text>
</comment>
<comment type="subcellular location">
    <subcellularLocation>
        <location evidence="1">Cytoplasm</location>
    </subcellularLocation>
</comment>
<comment type="miscellaneous">
    <text evidence="1">May also have succinyldiaminopimelate aminotransferase activity, thus carrying out the corresponding step in lysine biosynthesis.</text>
</comment>
<comment type="similarity">
    <text evidence="1">Belongs to the class-III pyridoxal-phosphate-dependent aminotransferase family. ArgD subfamily.</text>
</comment>
<feature type="chain" id="PRO_0000112713" description="Acetylornithine aminotransferase">
    <location>
        <begin position="1"/>
        <end position="399"/>
    </location>
</feature>
<feature type="binding site" evidence="1">
    <location>
        <begin position="99"/>
        <end position="100"/>
    </location>
    <ligand>
        <name>pyridoxal 5'-phosphate</name>
        <dbReference type="ChEBI" id="CHEBI:597326"/>
    </ligand>
</feature>
<feature type="binding site" evidence="1">
    <location>
        <position position="132"/>
    </location>
    <ligand>
        <name>pyridoxal 5'-phosphate</name>
        <dbReference type="ChEBI" id="CHEBI:597326"/>
    </ligand>
</feature>
<feature type="binding site" evidence="1">
    <location>
        <position position="135"/>
    </location>
    <ligand>
        <name>N(2)-acetyl-L-ornithine</name>
        <dbReference type="ChEBI" id="CHEBI:57805"/>
    </ligand>
</feature>
<feature type="binding site" evidence="1">
    <location>
        <begin position="217"/>
        <end position="220"/>
    </location>
    <ligand>
        <name>pyridoxal 5'-phosphate</name>
        <dbReference type="ChEBI" id="CHEBI:597326"/>
    </ligand>
</feature>
<feature type="binding site" evidence="1">
    <location>
        <position position="274"/>
    </location>
    <ligand>
        <name>N(2)-acetyl-L-ornithine</name>
        <dbReference type="ChEBI" id="CHEBI:57805"/>
    </ligand>
</feature>
<feature type="binding site" evidence="1">
    <location>
        <position position="275"/>
    </location>
    <ligand>
        <name>pyridoxal 5'-phosphate</name>
        <dbReference type="ChEBI" id="CHEBI:597326"/>
    </ligand>
</feature>
<feature type="modified residue" description="N6-(pyridoxal phosphate)lysine" evidence="1">
    <location>
        <position position="246"/>
    </location>
</feature>
<organism>
    <name type="scientific">Agrobacterium fabrum (strain C58 / ATCC 33970)</name>
    <name type="common">Agrobacterium tumefaciens (strain C58)</name>
    <dbReference type="NCBI Taxonomy" id="176299"/>
    <lineage>
        <taxon>Bacteria</taxon>
        <taxon>Pseudomonadati</taxon>
        <taxon>Pseudomonadota</taxon>
        <taxon>Alphaproteobacteria</taxon>
        <taxon>Hyphomicrobiales</taxon>
        <taxon>Rhizobiaceae</taxon>
        <taxon>Rhizobium/Agrobacterium group</taxon>
        <taxon>Agrobacterium</taxon>
        <taxon>Agrobacterium tumefaciens complex</taxon>
    </lineage>
</organism>
<accession>Q8UI71</accession>
<evidence type="ECO:0000255" key="1">
    <source>
        <dbReference type="HAMAP-Rule" id="MF_01107"/>
    </source>
</evidence>
<proteinExistence type="inferred from homology"/>
<name>ARGD_AGRFC</name>
<sequence>MAEAAAPLFDTFARAPLRFERGEGVWLFTESGERYLDFAAGVAVNSLGHAHPHLVEAIKTQAEKVWHVSNLYEVPGQEKLAKRLTEATFADKVFFTNSGAEALECAIKTARRYHYSKGHPEKFRIITFEGAFHGRTLATIAAGGQQKYLEGFGPKVEGFDQVPFGDVDALKAAITAETAALLIEPIQGEGGIRAPAKEFLQLLRSLCDEHDLLLIFDEVQTGVGRTGKFFAYEQTGVAPDIMAVAKGIGGGFPLGACLATADAASGMTAGVHGTTYGGNPLAMAVGNAVLDVVLADGFLEKVRDVALVFRQGLASLKDRYPDVIEEIRGEGLLLGIKARVPSGELLQAMRAEHLLGVPAGDNVIRLLPPLVTTAEEAREGLARVEAAAASLTAKQAKIA</sequence>
<gene>
    <name evidence="1" type="primary">argD</name>
    <name type="ordered locus">Atu0428</name>
    <name type="ORF">AGR_C_752</name>
</gene>
<protein>
    <recommendedName>
        <fullName evidence="1">Acetylornithine aminotransferase</fullName>
        <shortName evidence="1">ACOAT</shortName>
        <ecNumber evidence="1">2.6.1.11</ecNumber>
    </recommendedName>
</protein>
<reference key="1">
    <citation type="journal article" date="2001" name="Science">
        <title>The genome of the natural genetic engineer Agrobacterium tumefaciens C58.</title>
        <authorList>
            <person name="Wood D.W."/>
            <person name="Setubal J.C."/>
            <person name="Kaul R."/>
            <person name="Monks D.E."/>
            <person name="Kitajima J.P."/>
            <person name="Okura V.K."/>
            <person name="Zhou Y."/>
            <person name="Chen L."/>
            <person name="Wood G.E."/>
            <person name="Almeida N.F. Jr."/>
            <person name="Woo L."/>
            <person name="Chen Y."/>
            <person name="Paulsen I.T."/>
            <person name="Eisen J.A."/>
            <person name="Karp P.D."/>
            <person name="Bovee D. Sr."/>
            <person name="Chapman P."/>
            <person name="Clendenning J."/>
            <person name="Deatherage G."/>
            <person name="Gillet W."/>
            <person name="Grant C."/>
            <person name="Kutyavin T."/>
            <person name="Levy R."/>
            <person name="Li M.-J."/>
            <person name="McClelland E."/>
            <person name="Palmieri A."/>
            <person name="Raymond C."/>
            <person name="Rouse G."/>
            <person name="Saenphimmachak C."/>
            <person name="Wu Z."/>
            <person name="Romero P."/>
            <person name="Gordon D."/>
            <person name="Zhang S."/>
            <person name="Yoo H."/>
            <person name="Tao Y."/>
            <person name="Biddle P."/>
            <person name="Jung M."/>
            <person name="Krespan W."/>
            <person name="Perry M."/>
            <person name="Gordon-Kamm B."/>
            <person name="Liao L."/>
            <person name="Kim S."/>
            <person name="Hendrick C."/>
            <person name="Zhao Z.-Y."/>
            <person name="Dolan M."/>
            <person name="Chumley F."/>
            <person name="Tingey S.V."/>
            <person name="Tomb J.-F."/>
            <person name="Gordon M.P."/>
            <person name="Olson M.V."/>
            <person name="Nester E.W."/>
        </authorList>
    </citation>
    <scope>NUCLEOTIDE SEQUENCE [LARGE SCALE GENOMIC DNA]</scope>
    <source>
        <strain>C58 / ATCC 33970</strain>
    </source>
</reference>
<reference key="2">
    <citation type="journal article" date="2001" name="Science">
        <title>Genome sequence of the plant pathogen and biotechnology agent Agrobacterium tumefaciens C58.</title>
        <authorList>
            <person name="Goodner B."/>
            <person name="Hinkle G."/>
            <person name="Gattung S."/>
            <person name="Miller N."/>
            <person name="Blanchard M."/>
            <person name="Qurollo B."/>
            <person name="Goldman B.S."/>
            <person name="Cao Y."/>
            <person name="Askenazi M."/>
            <person name="Halling C."/>
            <person name="Mullin L."/>
            <person name="Houmiel K."/>
            <person name="Gordon J."/>
            <person name="Vaudin M."/>
            <person name="Iartchouk O."/>
            <person name="Epp A."/>
            <person name="Liu F."/>
            <person name="Wollam C."/>
            <person name="Allinger M."/>
            <person name="Doughty D."/>
            <person name="Scott C."/>
            <person name="Lappas C."/>
            <person name="Markelz B."/>
            <person name="Flanagan C."/>
            <person name="Crowell C."/>
            <person name="Gurson J."/>
            <person name="Lomo C."/>
            <person name="Sear C."/>
            <person name="Strub G."/>
            <person name="Cielo C."/>
            <person name="Slater S."/>
        </authorList>
    </citation>
    <scope>NUCLEOTIDE SEQUENCE [LARGE SCALE GENOMIC DNA]</scope>
    <source>
        <strain>C58 / ATCC 33970</strain>
    </source>
</reference>
<dbReference type="EC" id="2.6.1.11" evidence="1"/>
<dbReference type="EMBL" id="AE007869">
    <property type="protein sequence ID" value="AAK86241.1"/>
    <property type="molecule type" value="Genomic_DNA"/>
</dbReference>
<dbReference type="PIR" id="AB2629">
    <property type="entry name" value="AB2629"/>
</dbReference>
<dbReference type="PIR" id="H97410">
    <property type="entry name" value="H97410"/>
</dbReference>
<dbReference type="RefSeq" id="NP_353456.1">
    <property type="nucleotide sequence ID" value="NC_003062.2"/>
</dbReference>
<dbReference type="RefSeq" id="WP_010970888.1">
    <property type="nucleotide sequence ID" value="NC_003062.2"/>
</dbReference>
<dbReference type="SMR" id="Q8UI71"/>
<dbReference type="STRING" id="176299.Atu0428"/>
<dbReference type="EnsemblBacteria" id="AAK86241">
    <property type="protein sequence ID" value="AAK86241"/>
    <property type="gene ID" value="Atu0428"/>
</dbReference>
<dbReference type="GeneID" id="1132466"/>
<dbReference type="KEGG" id="atu:Atu0428"/>
<dbReference type="PATRIC" id="fig|176299.10.peg.418"/>
<dbReference type="eggNOG" id="COG4992">
    <property type="taxonomic scope" value="Bacteria"/>
</dbReference>
<dbReference type="HOGENOM" id="CLU_016922_10_1_5"/>
<dbReference type="OrthoDB" id="9801834at2"/>
<dbReference type="PhylomeDB" id="Q8UI71"/>
<dbReference type="BioCyc" id="AGRO:ATU0428-MONOMER"/>
<dbReference type="UniPathway" id="UPA00068">
    <property type="reaction ID" value="UER00109"/>
</dbReference>
<dbReference type="Proteomes" id="UP000000813">
    <property type="component" value="Chromosome circular"/>
</dbReference>
<dbReference type="GO" id="GO:0005737">
    <property type="term" value="C:cytoplasm"/>
    <property type="evidence" value="ECO:0007669"/>
    <property type="project" value="UniProtKB-SubCell"/>
</dbReference>
<dbReference type="GO" id="GO:0042802">
    <property type="term" value="F:identical protein binding"/>
    <property type="evidence" value="ECO:0007669"/>
    <property type="project" value="TreeGrafter"/>
</dbReference>
<dbReference type="GO" id="GO:0003992">
    <property type="term" value="F:N2-acetyl-L-ornithine:2-oxoglutarate 5-aminotransferase activity"/>
    <property type="evidence" value="ECO:0007669"/>
    <property type="project" value="UniProtKB-UniRule"/>
</dbReference>
<dbReference type="GO" id="GO:0030170">
    <property type="term" value="F:pyridoxal phosphate binding"/>
    <property type="evidence" value="ECO:0007669"/>
    <property type="project" value="InterPro"/>
</dbReference>
<dbReference type="GO" id="GO:0006526">
    <property type="term" value="P:L-arginine biosynthetic process"/>
    <property type="evidence" value="ECO:0007669"/>
    <property type="project" value="UniProtKB-UniRule"/>
</dbReference>
<dbReference type="CDD" id="cd00610">
    <property type="entry name" value="OAT_like"/>
    <property type="match status" value="1"/>
</dbReference>
<dbReference type="FunFam" id="3.40.640.10:FF:000004">
    <property type="entry name" value="Acetylornithine aminotransferase"/>
    <property type="match status" value="1"/>
</dbReference>
<dbReference type="Gene3D" id="3.90.1150.10">
    <property type="entry name" value="Aspartate Aminotransferase, domain 1"/>
    <property type="match status" value="1"/>
</dbReference>
<dbReference type="Gene3D" id="3.40.640.10">
    <property type="entry name" value="Type I PLP-dependent aspartate aminotransferase-like (Major domain)"/>
    <property type="match status" value="1"/>
</dbReference>
<dbReference type="HAMAP" id="MF_01107">
    <property type="entry name" value="ArgD_aminotrans_3"/>
    <property type="match status" value="1"/>
</dbReference>
<dbReference type="InterPro" id="IPR004636">
    <property type="entry name" value="AcOrn/SuccOrn_fam"/>
</dbReference>
<dbReference type="InterPro" id="IPR005814">
    <property type="entry name" value="Aminotrans_3"/>
</dbReference>
<dbReference type="InterPro" id="IPR049704">
    <property type="entry name" value="Aminotrans_3_PPA_site"/>
</dbReference>
<dbReference type="InterPro" id="IPR050103">
    <property type="entry name" value="Class-III_PLP-dep_AT"/>
</dbReference>
<dbReference type="InterPro" id="IPR015424">
    <property type="entry name" value="PyrdxlP-dep_Trfase"/>
</dbReference>
<dbReference type="InterPro" id="IPR015421">
    <property type="entry name" value="PyrdxlP-dep_Trfase_major"/>
</dbReference>
<dbReference type="InterPro" id="IPR015422">
    <property type="entry name" value="PyrdxlP-dep_Trfase_small"/>
</dbReference>
<dbReference type="NCBIfam" id="TIGR00707">
    <property type="entry name" value="argD"/>
    <property type="match status" value="1"/>
</dbReference>
<dbReference type="NCBIfam" id="NF002325">
    <property type="entry name" value="PRK01278.1"/>
    <property type="match status" value="1"/>
</dbReference>
<dbReference type="PANTHER" id="PTHR11986">
    <property type="entry name" value="AMINOTRANSFERASE CLASS III"/>
    <property type="match status" value="1"/>
</dbReference>
<dbReference type="PANTHER" id="PTHR11986:SF113">
    <property type="entry name" value="SUCCINYLORNITHINE TRANSAMINASE"/>
    <property type="match status" value="1"/>
</dbReference>
<dbReference type="Pfam" id="PF00202">
    <property type="entry name" value="Aminotran_3"/>
    <property type="match status" value="1"/>
</dbReference>
<dbReference type="PIRSF" id="PIRSF000521">
    <property type="entry name" value="Transaminase_4ab_Lys_Orn"/>
    <property type="match status" value="1"/>
</dbReference>
<dbReference type="SUPFAM" id="SSF53383">
    <property type="entry name" value="PLP-dependent transferases"/>
    <property type="match status" value="1"/>
</dbReference>
<dbReference type="PROSITE" id="PS00600">
    <property type="entry name" value="AA_TRANSFER_CLASS_3"/>
    <property type="match status" value="1"/>
</dbReference>